<feature type="chain" id="PRO_1000083217" description="Probable glycine dehydrogenase (decarboxylating) subunit 1">
    <location>
        <begin position="1"/>
        <end position="447"/>
    </location>
</feature>
<proteinExistence type="inferred from homology"/>
<reference key="1">
    <citation type="journal article" date="2008" name="Chem. Biol. Interact.">
        <title>Extending the Bacillus cereus group genomics to putative food-borne pathogens of different toxicity.</title>
        <authorList>
            <person name="Lapidus A."/>
            <person name="Goltsman E."/>
            <person name="Auger S."/>
            <person name="Galleron N."/>
            <person name="Segurens B."/>
            <person name="Dossat C."/>
            <person name="Land M.L."/>
            <person name="Broussolle V."/>
            <person name="Brillard J."/>
            <person name="Guinebretiere M.-H."/>
            <person name="Sanchis V."/>
            <person name="Nguen-the C."/>
            <person name="Lereclus D."/>
            <person name="Richardson P."/>
            <person name="Wincker P."/>
            <person name="Weissenbach J."/>
            <person name="Ehrlich S.D."/>
            <person name="Sorokin A."/>
        </authorList>
    </citation>
    <scope>NUCLEOTIDE SEQUENCE [LARGE SCALE GENOMIC DNA]</scope>
    <source>
        <strain>DSM 22905 / CIP 110041 / 391-98 / NVH 391-98</strain>
    </source>
</reference>
<name>GCSPA_BACCN</name>
<protein>
    <recommendedName>
        <fullName evidence="1">Probable glycine dehydrogenase (decarboxylating) subunit 1</fullName>
        <ecNumber evidence="1">1.4.4.2</ecNumber>
    </recommendedName>
    <alternativeName>
        <fullName evidence="1">Glycine cleavage system P-protein subunit 1</fullName>
    </alternativeName>
    <alternativeName>
        <fullName evidence="1">Glycine decarboxylase subunit 1</fullName>
    </alternativeName>
    <alternativeName>
        <fullName evidence="1">Glycine dehydrogenase (aminomethyl-transferring) subunit 1</fullName>
    </alternativeName>
</protein>
<sequence length="447" mass="49456">MLHRYLPMTEEDKKEMLETIGVQTIDELFSDIPESVRFKGDLKIKQAKSEPELLKELSGLARKNANLKEYASFLGAGVYDHYAPVIVDHVLSRSEFYTAYTPYQPEISQGELQAIFEFQTMICELTGMDVANSSMYDGGTALAEAAMLAAGHTRKKKILVSKAVHPESRAVLETYAKGQHLEVVEIDHKDGVTNLDGLQSEMDDTVACVIVQYPNFFGQIEKLADIEKIVHEQKALFIVSSNPLSLGVLTPPGKFGADIVIGDAQPFGIPTQFGGPHCGYFATTKAFMRKIPGRLVGQTVDTEGKRGFVLTLQAREQHIRRDKATSNICSNQALNALAASVAMTALGKRGVKEMARQNISKAQYAKRQFEEKGFKVVFTGPFFNEFVVDCKRPVKEINDTLLQKGIIGGYDLGRDDEKLVNHMLVAVTELRTKAEIDTLVNEMGAIQ</sequence>
<comment type="function">
    <text evidence="1">The glycine cleavage system catalyzes the degradation of glycine. The P protein binds the alpha-amino group of glycine through its pyridoxal phosphate cofactor; CO(2) is released and the remaining methylamine moiety is then transferred to the lipoamide cofactor of the H protein.</text>
</comment>
<comment type="catalytic activity">
    <reaction evidence="1">
        <text>N(6)-[(R)-lipoyl]-L-lysyl-[glycine-cleavage complex H protein] + glycine + H(+) = N(6)-[(R)-S(8)-aminomethyldihydrolipoyl]-L-lysyl-[glycine-cleavage complex H protein] + CO2</text>
        <dbReference type="Rhea" id="RHEA:24304"/>
        <dbReference type="Rhea" id="RHEA-COMP:10494"/>
        <dbReference type="Rhea" id="RHEA-COMP:10495"/>
        <dbReference type="ChEBI" id="CHEBI:15378"/>
        <dbReference type="ChEBI" id="CHEBI:16526"/>
        <dbReference type="ChEBI" id="CHEBI:57305"/>
        <dbReference type="ChEBI" id="CHEBI:83099"/>
        <dbReference type="ChEBI" id="CHEBI:83143"/>
        <dbReference type="EC" id="1.4.4.2"/>
    </reaction>
</comment>
<comment type="subunit">
    <text evidence="1">The glycine cleavage system is composed of four proteins: P, T, L and H. In this organism, the P 'protein' is a heterodimer of two subunits.</text>
</comment>
<comment type="similarity">
    <text evidence="1">Belongs to the GcvP family. N-terminal subunit subfamily.</text>
</comment>
<evidence type="ECO:0000255" key="1">
    <source>
        <dbReference type="HAMAP-Rule" id="MF_00712"/>
    </source>
</evidence>
<keyword id="KW-0560">Oxidoreductase</keyword>
<dbReference type="EC" id="1.4.4.2" evidence="1"/>
<dbReference type="EMBL" id="CP000764">
    <property type="protein sequence ID" value="ABS23145.1"/>
    <property type="molecule type" value="Genomic_DNA"/>
</dbReference>
<dbReference type="RefSeq" id="WP_012095373.1">
    <property type="nucleotide sequence ID" value="NC_009674.1"/>
</dbReference>
<dbReference type="SMR" id="A7GSN7"/>
<dbReference type="STRING" id="315749.Bcer98_2914"/>
<dbReference type="GeneID" id="33898166"/>
<dbReference type="KEGG" id="bcy:Bcer98_2914"/>
<dbReference type="eggNOG" id="COG0403">
    <property type="taxonomic scope" value="Bacteria"/>
</dbReference>
<dbReference type="HOGENOM" id="CLU_004620_0_2_9"/>
<dbReference type="OrthoDB" id="9771867at2"/>
<dbReference type="Proteomes" id="UP000002300">
    <property type="component" value="Chromosome"/>
</dbReference>
<dbReference type="GO" id="GO:0004375">
    <property type="term" value="F:glycine dehydrogenase (decarboxylating) activity"/>
    <property type="evidence" value="ECO:0007669"/>
    <property type="project" value="UniProtKB-EC"/>
</dbReference>
<dbReference type="GO" id="GO:0019464">
    <property type="term" value="P:glycine decarboxylation via glycine cleavage system"/>
    <property type="evidence" value="ECO:0007669"/>
    <property type="project" value="UniProtKB-UniRule"/>
</dbReference>
<dbReference type="GO" id="GO:0009116">
    <property type="term" value="P:nucleoside metabolic process"/>
    <property type="evidence" value="ECO:0007669"/>
    <property type="project" value="InterPro"/>
</dbReference>
<dbReference type="CDD" id="cd00613">
    <property type="entry name" value="GDC-P"/>
    <property type="match status" value="1"/>
</dbReference>
<dbReference type="FunFam" id="3.40.640.10:FF:000113">
    <property type="entry name" value="Probable glycine dehydrogenase (decarboxylating) subunit 1"/>
    <property type="match status" value="1"/>
</dbReference>
<dbReference type="Gene3D" id="3.90.1150.10">
    <property type="entry name" value="Aspartate Aminotransferase, domain 1"/>
    <property type="match status" value="1"/>
</dbReference>
<dbReference type="Gene3D" id="3.40.640.10">
    <property type="entry name" value="Type I PLP-dependent aspartate aminotransferase-like (Major domain)"/>
    <property type="match status" value="1"/>
</dbReference>
<dbReference type="HAMAP" id="MF_00712">
    <property type="entry name" value="GcvPA"/>
    <property type="match status" value="1"/>
</dbReference>
<dbReference type="InterPro" id="IPR023010">
    <property type="entry name" value="GcvPA"/>
</dbReference>
<dbReference type="InterPro" id="IPR049315">
    <property type="entry name" value="GDC-P_N"/>
</dbReference>
<dbReference type="InterPro" id="IPR020581">
    <property type="entry name" value="GDC_P"/>
</dbReference>
<dbReference type="InterPro" id="IPR015424">
    <property type="entry name" value="PyrdxlP-dep_Trfase"/>
</dbReference>
<dbReference type="InterPro" id="IPR015421">
    <property type="entry name" value="PyrdxlP-dep_Trfase_major"/>
</dbReference>
<dbReference type="InterPro" id="IPR015422">
    <property type="entry name" value="PyrdxlP-dep_Trfase_small"/>
</dbReference>
<dbReference type="NCBIfam" id="NF001696">
    <property type="entry name" value="PRK00451.1"/>
    <property type="match status" value="1"/>
</dbReference>
<dbReference type="PANTHER" id="PTHR42806">
    <property type="entry name" value="GLYCINE CLEAVAGE SYSTEM P-PROTEIN"/>
    <property type="match status" value="1"/>
</dbReference>
<dbReference type="PANTHER" id="PTHR42806:SF1">
    <property type="entry name" value="GLYCINE DEHYDROGENASE (DECARBOXYLATING)"/>
    <property type="match status" value="1"/>
</dbReference>
<dbReference type="Pfam" id="PF02347">
    <property type="entry name" value="GDC-P"/>
    <property type="match status" value="1"/>
</dbReference>
<dbReference type="PIRSF" id="PIRSF006815">
    <property type="entry name" value="GcvPA"/>
    <property type="match status" value="1"/>
</dbReference>
<dbReference type="SUPFAM" id="SSF53383">
    <property type="entry name" value="PLP-dependent transferases"/>
    <property type="match status" value="1"/>
</dbReference>
<organism>
    <name type="scientific">Bacillus cytotoxicus (strain DSM 22905 / CIP 110041 / 391-98 / NVH 391-98)</name>
    <dbReference type="NCBI Taxonomy" id="315749"/>
    <lineage>
        <taxon>Bacteria</taxon>
        <taxon>Bacillati</taxon>
        <taxon>Bacillota</taxon>
        <taxon>Bacilli</taxon>
        <taxon>Bacillales</taxon>
        <taxon>Bacillaceae</taxon>
        <taxon>Bacillus</taxon>
        <taxon>Bacillus cereus group</taxon>
    </lineage>
</organism>
<gene>
    <name evidence="1" type="primary">gcvPA</name>
    <name type="ordered locus">Bcer98_2914</name>
</gene>
<accession>A7GSN7</accession>